<proteinExistence type="inferred from homology"/>
<accession>Q5HLZ2</accession>
<feature type="chain" id="PRO_0000213631" description="Probable glucose uptake protein GlcU">
    <location>
        <begin position="1"/>
        <end position="287"/>
    </location>
</feature>
<feature type="transmembrane region" description="Helical" evidence="2">
    <location>
        <begin position="7"/>
        <end position="29"/>
    </location>
</feature>
<feature type="transmembrane region" description="Helical" evidence="2">
    <location>
        <begin position="34"/>
        <end position="56"/>
    </location>
</feature>
<feature type="transmembrane region" description="Helical" evidence="2">
    <location>
        <begin position="58"/>
        <end position="75"/>
    </location>
</feature>
<feature type="transmembrane region" description="Helical" evidence="2">
    <location>
        <begin position="114"/>
        <end position="136"/>
    </location>
</feature>
<feature type="transmembrane region" description="Helical" evidence="2">
    <location>
        <begin position="156"/>
        <end position="178"/>
    </location>
</feature>
<feature type="transmembrane region" description="Helical" evidence="2">
    <location>
        <begin position="183"/>
        <end position="202"/>
    </location>
</feature>
<feature type="transmembrane region" description="Helical" evidence="2">
    <location>
        <begin position="209"/>
        <end position="228"/>
    </location>
</feature>
<feature type="transmembrane region" description="Helical" evidence="2">
    <location>
        <begin position="233"/>
        <end position="255"/>
    </location>
</feature>
<feature type="transmembrane region" description="Helical" evidence="2">
    <location>
        <begin position="267"/>
        <end position="286"/>
    </location>
</feature>
<organism>
    <name type="scientific">Staphylococcus epidermidis (strain ATCC 35984 / DSM 28319 / BCRC 17069 / CCUG 31568 / BM 3577 / RP62A)</name>
    <dbReference type="NCBI Taxonomy" id="176279"/>
    <lineage>
        <taxon>Bacteria</taxon>
        <taxon>Bacillati</taxon>
        <taxon>Bacillota</taxon>
        <taxon>Bacilli</taxon>
        <taxon>Bacillales</taxon>
        <taxon>Staphylococcaceae</taxon>
        <taxon>Staphylococcus</taxon>
    </lineage>
</organism>
<comment type="function">
    <text evidence="1">Involved in the uptake of glucose.</text>
</comment>
<comment type="subcellular location">
    <subcellularLocation>
        <location evidence="3">Cell membrane</location>
        <topology evidence="3">Multi-pass membrane protein</topology>
    </subcellularLocation>
</comment>
<comment type="similarity">
    <text evidence="3">Belongs to the GRP transporter (TC 2.A.7.5) family.</text>
</comment>
<protein>
    <recommendedName>
        <fullName>Probable glucose uptake protein GlcU</fullName>
    </recommendedName>
</protein>
<evidence type="ECO:0000250" key="1"/>
<evidence type="ECO:0000255" key="2"/>
<evidence type="ECO:0000305" key="3"/>
<reference key="1">
    <citation type="journal article" date="2005" name="J. Bacteriol.">
        <title>Insights on evolution of virulence and resistance from the complete genome analysis of an early methicillin-resistant Staphylococcus aureus strain and a biofilm-producing methicillin-resistant Staphylococcus epidermidis strain.</title>
        <authorList>
            <person name="Gill S.R."/>
            <person name="Fouts D.E."/>
            <person name="Archer G.L."/>
            <person name="Mongodin E.F."/>
            <person name="DeBoy R.T."/>
            <person name="Ravel J."/>
            <person name="Paulsen I.T."/>
            <person name="Kolonay J.F."/>
            <person name="Brinkac L.M."/>
            <person name="Beanan M.J."/>
            <person name="Dodson R.J."/>
            <person name="Daugherty S.C."/>
            <person name="Madupu R."/>
            <person name="Angiuoli S.V."/>
            <person name="Durkin A.S."/>
            <person name="Haft D.H."/>
            <person name="Vamathevan J.J."/>
            <person name="Khouri H."/>
            <person name="Utterback T.R."/>
            <person name="Lee C."/>
            <person name="Dimitrov G."/>
            <person name="Jiang L."/>
            <person name="Qin H."/>
            <person name="Weidman J."/>
            <person name="Tran K."/>
            <person name="Kang K.H."/>
            <person name="Hance I.R."/>
            <person name="Nelson K.E."/>
            <person name="Fraser C.M."/>
        </authorList>
    </citation>
    <scope>NUCLEOTIDE SEQUENCE [LARGE SCALE GENOMIC DNA]</scope>
    <source>
        <strain>ATCC 35984 / DSM 28319 / BCRC 17069 / CCUG 31568 / BM 3577 / RP62A</strain>
    </source>
</reference>
<gene>
    <name type="primary">glcU</name>
    <name type="ordered locus">SERP1838</name>
</gene>
<keyword id="KW-1003">Cell membrane</keyword>
<keyword id="KW-0472">Membrane</keyword>
<keyword id="KW-1185">Reference proteome</keyword>
<keyword id="KW-0762">Sugar transport</keyword>
<keyword id="KW-0812">Transmembrane</keyword>
<keyword id="KW-1133">Transmembrane helix</keyword>
<keyword id="KW-0813">Transport</keyword>
<dbReference type="EMBL" id="CP000029">
    <property type="protein sequence ID" value="AAW55176.1"/>
    <property type="molecule type" value="Genomic_DNA"/>
</dbReference>
<dbReference type="RefSeq" id="WP_001829716.1">
    <property type="nucleotide sequence ID" value="NC_002976.3"/>
</dbReference>
<dbReference type="SMR" id="Q5HLZ2"/>
<dbReference type="STRING" id="176279.SERP1838"/>
<dbReference type="KEGG" id="ser:SERP1838"/>
<dbReference type="eggNOG" id="COG4975">
    <property type="taxonomic scope" value="Bacteria"/>
</dbReference>
<dbReference type="HOGENOM" id="CLU_076024_0_0_9"/>
<dbReference type="Proteomes" id="UP000000531">
    <property type="component" value="Chromosome"/>
</dbReference>
<dbReference type="GO" id="GO:0005886">
    <property type="term" value="C:plasma membrane"/>
    <property type="evidence" value="ECO:0007669"/>
    <property type="project" value="UniProtKB-SubCell"/>
</dbReference>
<dbReference type="GO" id="GO:0015144">
    <property type="term" value="F:carbohydrate transmembrane transporter activity"/>
    <property type="evidence" value="ECO:0007669"/>
    <property type="project" value="InterPro"/>
</dbReference>
<dbReference type="CDD" id="cd23112">
    <property type="entry name" value="glucose_uptake_GlcU"/>
    <property type="match status" value="1"/>
</dbReference>
<dbReference type="InterPro" id="IPR010651">
    <property type="entry name" value="Sugar_transport"/>
</dbReference>
<dbReference type="NCBIfam" id="TIGR00776">
    <property type="entry name" value="RhaT"/>
    <property type="match status" value="1"/>
</dbReference>
<dbReference type="PANTHER" id="PTHR16119">
    <property type="entry name" value="TRANSMEMBRANE PROTEIN 144"/>
    <property type="match status" value="1"/>
</dbReference>
<dbReference type="PANTHER" id="PTHR16119:SF17">
    <property type="entry name" value="TRANSMEMBRANE PROTEIN 144"/>
    <property type="match status" value="1"/>
</dbReference>
<dbReference type="Pfam" id="PF06800">
    <property type="entry name" value="Sugar_transport"/>
    <property type="match status" value="1"/>
</dbReference>
<dbReference type="SUPFAM" id="SSF103481">
    <property type="entry name" value="Multidrug resistance efflux transporter EmrE"/>
    <property type="match status" value="2"/>
</dbReference>
<name>GLCU_STAEQ</name>
<sequence>MQIVDFLIALLPALFWGSVVIINVFVGGGPYNQIRGTTLGTLFIGFSLLATGHAAFDNLTVIIVGLVSGALWAFGQGNQLKSVHLIGVSKTMPISTGMQLVGTTLFSAIFLGEWSTIVQVVMGLIAMILLVVGISLTSLKAKSEGKSDNPEFKKAMGILLLSTIGYVGYVVLGDIFGVSGTDALFFQSIGMAIGGLILSMNHNTSIKSTALNLIPGVIWGIGNLFMFYSQPKVGVATSFSLSQLLVIVSTLGGIFILGEKKDRRQMIGIWSGIIVIVIASIILGNLK</sequence>